<gene>
    <name evidence="1" type="primary">mdh</name>
    <name type="ordered locus">Dgeo_2161</name>
</gene>
<name>MDH_DEIGD</name>
<feature type="chain" id="PRO_0000292372" description="Malate dehydrogenase">
    <location>
        <begin position="1"/>
        <end position="334"/>
    </location>
</feature>
<feature type="active site" description="Proton acceptor" evidence="1">
    <location>
        <position position="193"/>
    </location>
</feature>
<feature type="binding site" evidence="1">
    <location>
        <begin position="17"/>
        <end position="23"/>
    </location>
    <ligand>
        <name>NAD(+)</name>
        <dbReference type="ChEBI" id="CHEBI:57540"/>
    </ligand>
</feature>
<feature type="binding site" evidence="1">
    <location>
        <position position="98"/>
    </location>
    <ligand>
        <name>substrate</name>
    </ligand>
</feature>
<feature type="binding site" evidence="1">
    <location>
        <position position="104"/>
    </location>
    <ligand>
        <name>substrate</name>
    </ligand>
</feature>
<feature type="binding site" evidence="1">
    <location>
        <position position="111"/>
    </location>
    <ligand>
        <name>NAD(+)</name>
        <dbReference type="ChEBI" id="CHEBI:57540"/>
    </ligand>
</feature>
<feature type="binding site" evidence="1">
    <location>
        <position position="118"/>
    </location>
    <ligand>
        <name>NAD(+)</name>
        <dbReference type="ChEBI" id="CHEBI:57540"/>
    </ligand>
</feature>
<feature type="binding site" evidence="1">
    <location>
        <begin position="135"/>
        <end position="137"/>
    </location>
    <ligand>
        <name>NAD(+)</name>
        <dbReference type="ChEBI" id="CHEBI:57540"/>
    </ligand>
</feature>
<feature type="binding site" evidence="1">
    <location>
        <position position="137"/>
    </location>
    <ligand>
        <name>substrate</name>
    </ligand>
</feature>
<feature type="binding site" evidence="1">
    <location>
        <position position="168"/>
    </location>
    <ligand>
        <name>substrate</name>
    </ligand>
</feature>
<protein>
    <recommendedName>
        <fullName evidence="1">Malate dehydrogenase</fullName>
        <ecNumber evidence="1">1.1.1.37</ecNumber>
    </recommendedName>
</protein>
<reference key="1">
    <citation type="submission" date="2006-04" db="EMBL/GenBank/DDBJ databases">
        <title>Complete sequence of chromosome of Deinococcus geothermalis DSM 11300.</title>
        <authorList>
            <person name="Copeland A."/>
            <person name="Lucas S."/>
            <person name="Lapidus A."/>
            <person name="Barry K."/>
            <person name="Detter J.C."/>
            <person name="Glavina del Rio T."/>
            <person name="Hammon N."/>
            <person name="Israni S."/>
            <person name="Dalin E."/>
            <person name="Tice H."/>
            <person name="Pitluck S."/>
            <person name="Brettin T."/>
            <person name="Bruce D."/>
            <person name="Han C."/>
            <person name="Tapia R."/>
            <person name="Saunders E."/>
            <person name="Gilna P."/>
            <person name="Schmutz J."/>
            <person name="Larimer F."/>
            <person name="Land M."/>
            <person name="Hauser L."/>
            <person name="Kyrpides N."/>
            <person name="Kim E."/>
            <person name="Daly M.J."/>
            <person name="Fredrickson J.K."/>
            <person name="Makarova K.S."/>
            <person name="Gaidamakova E.K."/>
            <person name="Zhai M."/>
            <person name="Richardson P."/>
        </authorList>
    </citation>
    <scope>NUCLEOTIDE SEQUENCE [LARGE SCALE GENOMIC DNA]</scope>
    <source>
        <strain>DSM 11300 / CIP 105573 / AG-3a</strain>
    </source>
</reference>
<sequence>MTMNQGTKQPVRVAVTGAAGQIGYSLLFRIAAGDMLGKDQPVILQLLEITPALKALAGVVMELRDCAFPLLADIVTSDDPLVAFKDADYALLVGAMPRKAGMERGDLLGANGGIFKPQGEALNKVASRDVKVLVVGNPANTNALIAQQNAPDLDPKQFTAMVRLDHNRAISQLAEKTGQPVSAIKNITIWGNHSSTQYPDLSQATVNGQPALDLVDREWYEKEYIPTVAKRGAAIIEARGASSAASAASAAIDHMRDWALGTPEGEWVSMAVPSDGSYGIPEGLIYGFPVRCRNGQYEIVQGLEISDFSRQKMDATAKELEEEREEVRRLGLVK</sequence>
<proteinExistence type="inferred from homology"/>
<evidence type="ECO:0000255" key="1">
    <source>
        <dbReference type="HAMAP-Rule" id="MF_01517"/>
    </source>
</evidence>
<organism>
    <name type="scientific">Deinococcus geothermalis (strain DSM 11300 / CIP 105573 / AG-3a)</name>
    <dbReference type="NCBI Taxonomy" id="319795"/>
    <lineage>
        <taxon>Bacteria</taxon>
        <taxon>Thermotogati</taxon>
        <taxon>Deinococcota</taxon>
        <taxon>Deinococci</taxon>
        <taxon>Deinococcales</taxon>
        <taxon>Deinococcaceae</taxon>
        <taxon>Deinococcus</taxon>
    </lineage>
</organism>
<keyword id="KW-0520">NAD</keyword>
<keyword id="KW-0560">Oxidoreductase</keyword>
<keyword id="KW-0816">Tricarboxylic acid cycle</keyword>
<dbReference type="EC" id="1.1.1.37" evidence="1"/>
<dbReference type="EMBL" id="CP000359">
    <property type="protein sequence ID" value="ABF46455.1"/>
    <property type="molecule type" value="Genomic_DNA"/>
</dbReference>
<dbReference type="RefSeq" id="WP_011531280.1">
    <property type="nucleotide sequence ID" value="NC_008025.1"/>
</dbReference>
<dbReference type="SMR" id="Q1IWC9"/>
<dbReference type="STRING" id="319795.Dgeo_2161"/>
<dbReference type="KEGG" id="dge:Dgeo_2161"/>
<dbReference type="eggNOG" id="COG0039">
    <property type="taxonomic scope" value="Bacteria"/>
</dbReference>
<dbReference type="HOGENOM" id="CLU_040727_2_0_0"/>
<dbReference type="Proteomes" id="UP000002431">
    <property type="component" value="Chromosome"/>
</dbReference>
<dbReference type="GO" id="GO:0030060">
    <property type="term" value="F:L-malate dehydrogenase (NAD+) activity"/>
    <property type="evidence" value="ECO:0007669"/>
    <property type="project" value="UniProtKB-UniRule"/>
</dbReference>
<dbReference type="GO" id="GO:0006108">
    <property type="term" value="P:malate metabolic process"/>
    <property type="evidence" value="ECO:0007669"/>
    <property type="project" value="InterPro"/>
</dbReference>
<dbReference type="GO" id="GO:0006099">
    <property type="term" value="P:tricarboxylic acid cycle"/>
    <property type="evidence" value="ECO:0007669"/>
    <property type="project" value="UniProtKB-UniRule"/>
</dbReference>
<dbReference type="CDD" id="cd01338">
    <property type="entry name" value="MDH_chloroplast-like"/>
    <property type="match status" value="1"/>
</dbReference>
<dbReference type="FunFam" id="3.40.50.720:FF:000010">
    <property type="entry name" value="Malate dehydrogenase"/>
    <property type="match status" value="1"/>
</dbReference>
<dbReference type="FunFam" id="3.90.110.10:FF:000002">
    <property type="entry name" value="Malate dehydrogenase"/>
    <property type="match status" value="1"/>
</dbReference>
<dbReference type="Gene3D" id="3.90.110.10">
    <property type="entry name" value="Lactate dehydrogenase/glycoside hydrolase, family 4, C-terminal"/>
    <property type="match status" value="1"/>
</dbReference>
<dbReference type="Gene3D" id="3.40.50.720">
    <property type="entry name" value="NAD(P)-binding Rossmann-like Domain"/>
    <property type="match status" value="1"/>
</dbReference>
<dbReference type="HAMAP" id="MF_01517">
    <property type="entry name" value="Malate_dehydrog_2"/>
    <property type="match status" value="1"/>
</dbReference>
<dbReference type="InterPro" id="IPR001557">
    <property type="entry name" value="L-lactate/malate_DH"/>
</dbReference>
<dbReference type="InterPro" id="IPR022383">
    <property type="entry name" value="Lactate/malate_DH_C"/>
</dbReference>
<dbReference type="InterPro" id="IPR001236">
    <property type="entry name" value="Lactate/malate_DH_N"/>
</dbReference>
<dbReference type="InterPro" id="IPR015955">
    <property type="entry name" value="Lactate_DH/Glyco_Ohase_4_C"/>
</dbReference>
<dbReference type="InterPro" id="IPR010945">
    <property type="entry name" value="Malate_DH_type2"/>
</dbReference>
<dbReference type="InterPro" id="IPR036291">
    <property type="entry name" value="NAD(P)-bd_dom_sf"/>
</dbReference>
<dbReference type="NCBIfam" id="TIGR01759">
    <property type="entry name" value="MalateDH-SF1"/>
    <property type="match status" value="1"/>
</dbReference>
<dbReference type="NCBIfam" id="NF003916">
    <property type="entry name" value="PRK05442.1"/>
    <property type="match status" value="1"/>
</dbReference>
<dbReference type="PANTHER" id="PTHR23382">
    <property type="entry name" value="MALATE DEHYDROGENASE"/>
    <property type="match status" value="1"/>
</dbReference>
<dbReference type="Pfam" id="PF02866">
    <property type="entry name" value="Ldh_1_C"/>
    <property type="match status" value="1"/>
</dbReference>
<dbReference type="Pfam" id="PF00056">
    <property type="entry name" value="Ldh_1_N"/>
    <property type="match status" value="1"/>
</dbReference>
<dbReference type="PIRSF" id="PIRSF000102">
    <property type="entry name" value="Lac_mal_DH"/>
    <property type="match status" value="1"/>
</dbReference>
<dbReference type="SUPFAM" id="SSF56327">
    <property type="entry name" value="LDH C-terminal domain-like"/>
    <property type="match status" value="1"/>
</dbReference>
<dbReference type="SUPFAM" id="SSF51735">
    <property type="entry name" value="NAD(P)-binding Rossmann-fold domains"/>
    <property type="match status" value="1"/>
</dbReference>
<comment type="function">
    <text evidence="1">Catalyzes the reversible oxidation of malate to oxaloacetate.</text>
</comment>
<comment type="catalytic activity">
    <reaction evidence="1">
        <text>(S)-malate + NAD(+) = oxaloacetate + NADH + H(+)</text>
        <dbReference type="Rhea" id="RHEA:21432"/>
        <dbReference type="ChEBI" id="CHEBI:15378"/>
        <dbReference type="ChEBI" id="CHEBI:15589"/>
        <dbReference type="ChEBI" id="CHEBI:16452"/>
        <dbReference type="ChEBI" id="CHEBI:57540"/>
        <dbReference type="ChEBI" id="CHEBI:57945"/>
        <dbReference type="EC" id="1.1.1.37"/>
    </reaction>
</comment>
<comment type="similarity">
    <text evidence="1">Belongs to the LDH/MDH superfamily. MDH type 2 family.</text>
</comment>
<accession>Q1IWC9</accession>